<sequence length="323" mass="34664">MTTYALVGDVGGTNARLALCAVATGEILQAKTYSGLEYESLEDVIKQYLSEHQAKVTDACIAIACPITGDWVAMTNHTWAFSIAAMQQNLGLDHLEVINDFTAVSMAIPVLPAQDVLQFGGTQPQPGKPVAVYGAGTGLGVAHLVNVDRRWISLAGEGGHVDFAPNSEEEDQILAVLRQELGHVSAERVLSGPGLVNLYRAIVISDARLPEKLAPKDITARALADSCTDCRRALSLFCVIMGRFGGNLALNLSTFGGVYIAGGIVPRFMEFFKASGFRAAFEDKGRFKDFLQDIPVYMITHPQPGLLGAGAYLRQKLGYELSS</sequence>
<protein>
    <recommendedName>
        <fullName evidence="1">Glucokinase</fullName>
        <ecNumber evidence="1">2.7.1.2</ecNumber>
    </recommendedName>
    <alternativeName>
        <fullName evidence="1">Glucose kinase</fullName>
    </alternativeName>
</protein>
<gene>
    <name evidence="1" type="primary">glk</name>
    <name type="ordered locus">YPO2977</name>
    <name type="ordered locus">y1505</name>
    <name type="ordered locus">YP_2602</name>
</gene>
<organism>
    <name type="scientific">Yersinia pestis</name>
    <dbReference type="NCBI Taxonomy" id="632"/>
    <lineage>
        <taxon>Bacteria</taxon>
        <taxon>Pseudomonadati</taxon>
        <taxon>Pseudomonadota</taxon>
        <taxon>Gammaproteobacteria</taxon>
        <taxon>Enterobacterales</taxon>
        <taxon>Yersiniaceae</taxon>
        <taxon>Yersinia</taxon>
    </lineage>
</organism>
<name>GLK_YERPE</name>
<evidence type="ECO:0000255" key="1">
    <source>
        <dbReference type="HAMAP-Rule" id="MF_00524"/>
    </source>
</evidence>
<evidence type="ECO:0000305" key="2"/>
<keyword id="KW-0067">ATP-binding</keyword>
<keyword id="KW-0963">Cytoplasm</keyword>
<keyword id="KW-0324">Glycolysis</keyword>
<keyword id="KW-0418">Kinase</keyword>
<keyword id="KW-0547">Nucleotide-binding</keyword>
<keyword id="KW-1185">Reference proteome</keyword>
<keyword id="KW-0808">Transferase</keyword>
<dbReference type="EC" id="2.7.1.2" evidence="1"/>
<dbReference type="EMBL" id="AL590842">
    <property type="protein sequence ID" value="CAL21581.1"/>
    <property type="molecule type" value="Genomic_DNA"/>
</dbReference>
<dbReference type="EMBL" id="AE009952">
    <property type="protein sequence ID" value="AAM85076.1"/>
    <property type="status" value="ALT_INIT"/>
    <property type="molecule type" value="Genomic_DNA"/>
</dbReference>
<dbReference type="EMBL" id="AE017042">
    <property type="protein sequence ID" value="AAS62795.1"/>
    <property type="molecule type" value="Genomic_DNA"/>
</dbReference>
<dbReference type="PIR" id="AB0362">
    <property type="entry name" value="AB0362"/>
</dbReference>
<dbReference type="RefSeq" id="WP_002211615.1">
    <property type="nucleotide sequence ID" value="NZ_WUCM01000029.1"/>
</dbReference>
<dbReference type="RefSeq" id="YP_002347901.1">
    <property type="nucleotide sequence ID" value="NC_003143.1"/>
</dbReference>
<dbReference type="SMR" id="P58619"/>
<dbReference type="STRING" id="214092.YPO2977"/>
<dbReference type="PaxDb" id="214092-YPO2977"/>
<dbReference type="DNASU" id="1146452"/>
<dbReference type="EnsemblBacteria" id="AAS62795">
    <property type="protein sequence ID" value="AAS62795"/>
    <property type="gene ID" value="YP_2602"/>
</dbReference>
<dbReference type="GeneID" id="57975727"/>
<dbReference type="KEGG" id="ype:YPO2977"/>
<dbReference type="KEGG" id="ypk:y1505"/>
<dbReference type="KEGG" id="ypm:YP_2602"/>
<dbReference type="PATRIC" id="fig|214092.21.peg.3430"/>
<dbReference type="eggNOG" id="COG0837">
    <property type="taxonomic scope" value="Bacteria"/>
</dbReference>
<dbReference type="HOGENOM" id="CLU_042582_1_0_6"/>
<dbReference type="OMA" id="NNHWRLS"/>
<dbReference type="OrthoDB" id="9800595at2"/>
<dbReference type="Proteomes" id="UP000000815">
    <property type="component" value="Chromosome"/>
</dbReference>
<dbReference type="Proteomes" id="UP000001019">
    <property type="component" value="Chromosome"/>
</dbReference>
<dbReference type="Proteomes" id="UP000002490">
    <property type="component" value="Chromosome"/>
</dbReference>
<dbReference type="GO" id="GO:0005829">
    <property type="term" value="C:cytosol"/>
    <property type="evidence" value="ECO:0000318"/>
    <property type="project" value="GO_Central"/>
</dbReference>
<dbReference type="GO" id="GO:0005524">
    <property type="term" value="F:ATP binding"/>
    <property type="evidence" value="ECO:0007669"/>
    <property type="project" value="UniProtKB-UniRule"/>
</dbReference>
<dbReference type="GO" id="GO:0005536">
    <property type="term" value="F:D-glucose binding"/>
    <property type="evidence" value="ECO:0007669"/>
    <property type="project" value="InterPro"/>
</dbReference>
<dbReference type="GO" id="GO:0004340">
    <property type="term" value="F:glucokinase activity"/>
    <property type="evidence" value="ECO:0000318"/>
    <property type="project" value="GO_Central"/>
</dbReference>
<dbReference type="GO" id="GO:0006096">
    <property type="term" value="P:glycolytic process"/>
    <property type="evidence" value="ECO:0007669"/>
    <property type="project" value="UniProtKB-UniRule"/>
</dbReference>
<dbReference type="CDD" id="cd24008">
    <property type="entry name" value="ASKHA_NBD_GLK"/>
    <property type="match status" value="1"/>
</dbReference>
<dbReference type="FunFam" id="3.30.420.40:FF:000045">
    <property type="entry name" value="Glucokinase"/>
    <property type="match status" value="1"/>
</dbReference>
<dbReference type="FunFam" id="3.40.367.20:FF:000002">
    <property type="entry name" value="Glucokinase"/>
    <property type="match status" value="1"/>
</dbReference>
<dbReference type="Gene3D" id="3.30.420.40">
    <property type="match status" value="1"/>
</dbReference>
<dbReference type="Gene3D" id="3.40.367.20">
    <property type="match status" value="1"/>
</dbReference>
<dbReference type="HAMAP" id="MF_00524">
    <property type="entry name" value="Glucokinase"/>
    <property type="match status" value="1"/>
</dbReference>
<dbReference type="InterPro" id="IPR043129">
    <property type="entry name" value="ATPase_NBD"/>
</dbReference>
<dbReference type="InterPro" id="IPR050201">
    <property type="entry name" value="Bacterial_glucokinase"/>
</dbReference>
<dbReference type="InterPro" id="IPR003836">
    <property type="entry name" value="Glucokinase"/>
</dbReference>
<dbReference type="NCBIfam" id="TIGR00749">
    <property type="entry name" value="glk"/>
    <property type="match status" value="1"/>
</dbReference>
<dbReference type="NCBIfam" id="NF001414">
    <property type="entry name" value="PRK00292.1-1"/>
    <property type="match status" value="1"/>
</dbReference>
<dbReference type="NCBIfam" id="NF001416">
    <property type="entry name" value="PRK00292.1-3"/>
    <property type="match status" value="1"/>
</dbReference>
<dbReference type="NCBIfam" id="NF009073">
    <property type="entry name" value="PRK12408.1"/>
    <property type="match status" value="1"/>
</dbReference>
<dbReference type="PANTHER" id="PTHR47690">
    <property type="entry name" value="GLUCOKINASE"/>
    <property type="match status" value="1"/>
</dbReference>
<dbReference type="PANTHER" id="PTHR47690:SF1">
    <property type="entry name" value="GLUCOKINASE"/>
    <property type="match status" value="1"/>
</dbReference>
<dbReference type="Pfam" id="PF02685">
    <property type="entry name" value="Glucokinase"/>
    <property type="match status" value="1"/>
</dbReference>
<dbReference type="SUPFAM" id="SSF53067">
    <property type="entry name" value="Actin-like ATPase domain"/>
    <property type="match status" value="1"/>
</dbReference>
<reference key="1">
    <citation type="journal article" date="2001" name="Nature">
        <title>Genome sequence of Yersinia pestis, the causative agent of plague.</title>
        <authorList>
            <person name="Parkhill J."/>
            <person name="Wren B.W."/>
            <person name="Thomson N.R."/>
            <person name="Titball R.W."/>
            <person name="Holden M.T.G."/>
            <person name="Prentice M.B."/>
            <person name="Sebaihia M."/>
            <person name="James K.D."/>
            <person name="Churcher C.M."/>
            <person name="Mungall K.L."/>
            <person name="Baker S."/>
            <person name="Basham D."/>
            <person name="Bentley S.D."/>
            <person name="Brooks K."/>
            <person name="Cerdeno-Tarraga A.-M."/>
            <person name="Chillingworth T."/>
            <person name="Cronin A."/>
            <person name="Davies R.M."/>
            <person name="Davis P."/>
            <person name="Dougan G."/>
            <person name="Feltwell T."/>
            <person name="Hamlin N."/>
            <person name="Holroyd S."/>
            <person name="Jagels K."/>
            <person name="Karlyshev A.V."/>
            <person name="Leather S."/>
            <person name="Moule S."/>
            <person name="Oyston P.C.F."/>
            <person name="Quail M.A."/>
            <person name="Rutherford K.M."/>
            <person name="Simmonds M."/>
            <person name="Skelton J."/>
            <person name="Stevens K."/>
            <person name="Whitehead S."/>
            <person name="Barrell B.G."/>
        </authorList>
    </citation>
    <scope>NUCLEOTIDE SEQUENCE [LARGE SCALE GENOMIC DNA]</scope>
    <source>
        <strain>CO-92 / Biovar Orientalis</strain>
    </source>
</reference>
<reference key="2">
    <citation type="journal article" date="2002" name="J. Bacteriol.">
        <title>Genome sequence of Yersinia pestis KIM.</title>
        <authorList>
            <person name="Deng W."/>
            <person name="Burland V."/>
            <person name="Plunkett G. III"/>
            <person name="Boutin A."/>
            <person name="Mayhew G.F."/>
            <person name="Liss P."/>
            <person name="Perna N.T."/>
            <person name="Rose D.J."/>
            <person name="Mau B."/>
            <person name="Zhou S."/>
            <person name="Schwartz D.C."/>
            <person name="Fetherston J.D."/>
            <person name="Lindler L.E."/>
            <person name="Brubaker R.R."/>
            <person name="Plano G.V."/>
            <person name="Straley S.C."/>
            <person name="McDonough K.A."/>
            <person name="Nilles M.L."/>
            <person name="Matson J.S."/>
            <person name="Blattner F.R."/>
            <person name="Perry R.D."/>
        </authorList>
    </citation>
    <scope>NUCLEOTIDE SEQUENCE [LARGE SCALE GENOMIC DNA]</scope>
    <source>
        <strain>KIM10+ / Biovar Mediaevalis</strain>
    </source>
</reference>
<reference key="3">
    <citation type="journal article" date="2004" name="DNA Res.">
        <title>Complete genome sequence of Yersinia pestis strain 91001, an isolate avirulent to humans.</title>
        <authorList>
            <person name="Song Y."/>
            <person name="Tong Z."/>
            <person name="Wang J."/>
            <person name="Wang L."/>
            <person name="Guo Z."/>
            <person name="Han Y."/>
            <person name="Zhang J."/>
            <person name="Pei D."/>
            <person name="Zhou D."/>
            <person name="Qin H."/>
            <person name="Pang X."/>
            <person name="Han Y."/>
            <person name="Zhai J."/>
            <person name="Li M."/>
            <person name="Cui B."/>
            <person name="Qi Z."/>
            <person name="Jin L."/>
            <person name="Dai R."/>
            <person name="Chen F."/>
            <person name="Li S."/>
            <person name="Ye C."/>
            <person name="Du Z."/>
            <person name="Lin W."/>
            <person name="Wang J."/>
            <person name="Yu J."/>
            <person name="Yang H."/>
            <person name="Wang J."/>
            <person name="Huang P."/>
            <person name="Yang R."/>
        </authorList>
    </citation>
    <scope>NUCLEOTIDE SEQUENCE [LARGE SCALE GENOMIC DNA]</scope>
    <source>
        <strain>91001 / Biovar Mediaevalis</strain>
    </source>
</reference>
<feature type="chain" id="PRO_0000215145" description="Glucokinase">
    <location>
        <begin position="1"/>
        <end position="323"/>
    </location>
</feature>
<feature type="binding site" evidence="1">
    <location>
        <begin position="8"/>
        <end position="13"/>
    </location>
    <ligand>
        <name>ATP</name>
        <dbReference type="ChEBI" id="CHEBI:30616"/>
    </ligand>
</feature>
<comment type="catalytic activity">
    <reaction evidence="1">
        <text>D-glucose + ATP = D-glucose 6-phosphate + ADP + H(+)</text>
        <dbReference type="Rhea" id="RHEA:17825"/>
        <dbReference type="ChEBI" id="CHEBI:4167"/>
        <dbReference type="ChEBI" id="CHEBI:15378"/>
        <dbReference type="ChEBI" id="CHEBI:30616"/>
        <dbReference type="ChEBI" id="CHEBI:61548"/>
        <dbReference type="ChEBI" id="CHEBI:456216"/>
        <dbReference type="EC" id="2.7.1.2"/>
    </reaction>
</comment>
<comment type="subcellular location">
    <subcellularLocation>
        <location evidence="1">Cytoplasm</location>
    </subcellularLocation>
</comment>
<comment type="similarity">
    <text evidence="1">Belongs to the bacterial glucokinase family.</text>
</comment>
<comment type="sequence caution" evidence="2">
    <conflict type="erroneous initiation">
        <sequence resource="EMBL-CDS" id="AAM85076"/>
    </conflict>
</comment>
<proteinExistence type="inferred from homology"/>
<accession>P58619</accession>
<accession>Q0WCT7</accession>